<accession>O28792</accession>
<name>Y1480_ARCFU</name>
<organism>
    <name type="scientific">Archaeoglobus fulgidus (strain ATCC 49558 / DSM 4304 / JCM 9628 / NBRC 100126 / VC-16)</name>
    <dbReference type="NCBI Taxonomy" id="224325"/>
    <lineage>
        <taxon>Archaea</taxon>
        <taxon>Methanobacteriati</taxon>
        <taxon>Methanobacteriota</taxon>
        <taxon>Archaeoglobi</taxon>
        <taxon>Archaeoglobales</taxon>
        <taxon>Archaeoglobaceae</taxon>
        <taxon>Archaeoglobus</taxon>
    </lineage>
</organism>
<protein>
    <recommendedName>
        <fullName>Uncharacterized protein AF_1480</fullName>
    </recommendedName>
</protein>
<proteinExistence type="predicted"/>
<keyword id="KW-1185">Reference proteome</keyword>
<sequence length="53" mass="5955">MIVLDTSIIIDYFRGVETTYNLIDEESEIAVTTINCSQIIRGDTFQLQAPLSC</sequence>
<reference key="1">
    <citation type="journal article" date="1997" name="Nature">
        <title>The complete genome sequence of the hyperthermophilic, sulphate-reducing archaeon Archaeoglobus fulgidus.</title>
        <authorList>
            <person name="Klenk H.-P."/>
            <person name="Clayton R.A."/>
            <person name="Tomb J.-F."/>
            <person name="White O."/>
            <person name="Nelson K.E."/>
            <person name="Ketchum K.A."/>
            <person name="Dodson R.J."/>
            <person name="Gwinn M.L."/>
            <person name="Hickey E.K."/>
            <person name="Peterson J.D."/>
            <person name="Richardson D.L."/>
            <person name="Kerlavage A.R."/>
            <person name="Graham D.E."/>
            <person name="Kyrpides N.C."/>
            <person name="Fleischmann R.D."/>
            <person name="Quackenbush J."/>
            <person name="Lee N.H."/>
            <person name="Sutton G.G."/>
            <person name="Gill S.R."/>
            <person name="Kirkness E.F."/>
            <person name="Dougherty B.A."/>
            <person name="McKenney K."/>
            <person name="Adams M.D."/>
            <person name="Loftus B.J."/>
            <person name="Peterson S.N."/>
            <person name="Reich C.I."/>
            <person name="McNeil L.K."/>
            <person name="Badger J.H."/>
            <person name="Glodek A."/>
            <person name="Zhou L."/>
            <person name="Overbeek R."/>
            <person name="Gocayne J.D."/>
            <person name="Weidman J.F."/>
            <person name="McDonald L.A."/>
            <person name="Utterback T.R."/>
            <person name="Cotton M.D."/>
            <person name="Spriggs T."/>
            <person name="Artiach P."/>
            <person name="Kaine B.P."/>
            <person name="Sykes S.M."/>
            <person name="Sadow P.W."/>
            <person name="D'Andrea K.P."/>
            <person name="Bowman C."/>
            <person name="Fujii C."/>
            <person name="Garland S.A."/>
            <person name="Mason T.M."/>
            <person name="Olsen G.J."/>
            <person name="Fraser C.M."/>
            <person name="Smith H.O."/>
            <person name="Woese C.R."/>
            <person name="Venter J.C."/>
        </authorList>
    </citation>
    <scope>NUCLEOTIDE SEQUENCE [LARGE SCALE GENOMIC DNA]</scope>
    <source>
        <strain>ATCC 49558 / DSM 4304 / JCM 9628 / NBRC 100126 / VC-16</strain>
    </source>
</reference>
<dbReference type="EMBL" id="AE000782">
    <property type="protein sequence ID" value="AAB89767.1"/>
    <property type="molecule type" value="Genomic_DNA"/>
</dbReference>
<dbReference type="PIR" id="G69434">
    <property type="entry name" value="G69434"/>
</dbReference>
<dbReference type="SMR" id="O28792"/>
<dbReference type="STRING" id="224325.AF_1480"/>
<dbReference type="PaxDb" id="224325-AF_1480"/>
<dbReference type="EnsemblBacteria" id="AAB89767">
    <property type="protein sequence ID" value="AAB89767"/>
    <property type="gene ID" value="AF_1480"/>
</dbReference>
<dbReference type="KEGG" id="afu:AF_1480"/>
<dbReference type="eggNOG" id="arCOG02219">
    <property type="taxonomic scope" value="Archaea"/>
</dbReference>
<dbReference type="HOGENOM" id="CLU_3056917_0_0_2"/>
<dbReference type="Proteomes" id="UP000002199">
    <property type="component" value="Chromosome"/>
</dbReference>
<dbReference type="InterPro" id="IPR029060">
    <property type="entry name" value="PIN-like_dom_sf"/>
</dbReference>
<dbReference type="SUPFAM" id="SSF88723">
    <property type="entry name" value="PIN domain-like"/>
    <property type="match status" value="1"/>
</dbReference>
<feature type="chain" id="PRO_0000128008" description="Uncharacterized protein AF_1480">
    <location>
        <begin position="1"/>
        <end position="53"/>
    </location>
</feature>
<gene>
    <name type="ordered locus">AF_1480</name>
</gene>